<comment type="function">
    <text evidence="1">Part of the ABC transporter complex BtuCDF involved in vitamin B12 import. Involved in the translocation of the substrate across the membrane.</text>
</comment>
<comment type="subunit">
    <text evidence="1">The complex is composed of two ATP-binding proteins (BtuD), two transmembrane proteins (BtuC) and a solute-binding protein (BtuF).</text>
</comment>
<comment type="subcellular location">
    <subcellularLocation>
        <location evidence="1">Cell inner membrane</location>
        <topology evidence="1">Multi-pass membrane protein</topology>
    </subcellularLocation>
</comment>
<comment type="similarity">
    <text evidence="1">Belongs to the binding-protein-dependent transport system permease family. FecCD subfamily.</text>
</comment>
<feature type="chain" id="PRO_1000062775" description="Vitamin B12 import system permease protein BtuC">
    <location>
        <begin position="1"/>
        <end position="326"/>
    </location>
</feature>
<feature type="transmembrane region" description="Helical" evidence="1">
    <location>
        <begin position="15"/>
        <end position="35"/>
    </location>
</feature>
<feature type="transmembrane region" description="Helical" evidence="1">
    <location>
        <begin position="61"/>
        <end position="81"/>
    </location>
</feature>
<feature type="transmembrane region" description="Helical" evidence="1">
    <location>
        <begin position="88"/>
        <end position="108"/>
    </location>
</feature>
<feature type="transmembrane region" description="Helical" evidence="1">
    <location>
        <begin position="112"/>
        <end position="132"/>
    </location>
</feature>
<feature type="transmembrane region" description="Helical" evidence="1">
    <location>
        <begin position="146"/>
        <end position="166"/>
    </location>
</feature>
<feature type="transmembrane region" description="Helical" evidence="1">
    <location>
        <begin position="184"/>
        <end position="204"/>
    </location>
</feature>
<feature type="transmembrane region" description="Helical" evidence="1">
    <location>
        <begin position="240"/>
        <end position="260"/>
    </location>
</feature>
<feature type="transmembrane region" description="Helical" evidence="1">
    <location>
        <begin position="274"/>
        <end position="294"/>
    </location>
</feature>
<feature type="transmembrane region" description="Helical" evidence="1">
    <location>
        <begin position="302"/>
        <end position="322"/>
    </location>
</feature>
<dbReference type="EMBL" id="CP000243">
    <property type="protein sequence ID" value="ABE07380.1"/>
    <property type="molecule type" value="Genomic_DNA"/>
</dbReference>
<dbReference type="RefSeq" id="WP_000956528.1">
    <property type="nucleotide sequence ID" value="NZ_CP064825.1"/>
</dbReference>
<dbReference type="SMR" id="Q1RB84"/>
<dbReference type="KEGG" id="eci:UTI89_C1904"/>
<dbReference type="HOGENOM" id="CLU_013016_0_3_6"/>
<dbReference type="Proteomes" id="UP000001952">
    <property type="component" value="Chromosome"/>
</dbReference>
<dbReference type="GO" id="GO:0005886">
    <property type="term" value="C:plasma membrane"/>
    <property type="evidence" value="ECO:0007669"/>
    <property type="project" value="UniProtKB-SubCell"/>
</dbReference>
<dbReference type="GO" id="GO:0090482">
    <property type="term" value="F:vitamin transmembrane transporter activity"/>
    <property type="evidence" value="ECO:0007669"/>
    <property type="project" value="UniProtKB-UniRule"/>
</dbReference>
<dbReference type="GO" id="GO:0015889">
    <property type="term" value="P:cobalamin transport"/>
    <property type="evidence" value="ECO:0007669"/>
    <property type="project" value="UniProtKB-UniRule"/>
</dbReference>
<dbReference type="CDD" id="cd06550">
    <property type="entry name" value="TM_ABC_iron-siderophores_like"/>
    <property type="match status" value="1"/>
</dbReference>
<dbReference type="FunFam" id="1.10.3470.10:FF:000001">
    <property type="entry name" value="Vitamin B12 ABC transporter permease BtuC"/>
    <property type="match status" value="1"/>
</dbReference>
<dbReference type="Gene3D" id="1.10.3470.10">
    <property type="entry name" value="ABC transporter involved in vitamin B12 uptake, BtuC"/>
    <property type="match status" value="1"/>
</dbReference>
<dbReference type="HAMAP" id="MF_01004">
    <property type="entry name" value="BtuC"/>
    <property type="match status" value="1"/>
</dbReference>
<dbReference type="InterPro" id="IPR037294">
    <property type="entry name" value="ABC_BtuC-like"/>
</dbReference>
<dbReference type="InterPro" id="IPR023691">
    <property type="entry name" value="ABC_transptr_BtuC"/>
</dbReference>
<dbReference type="InterPro" id="IPR000522">
    <property type="entry name" value="ABC_transptr_permease_BtuC"/>
</dbReference>
<dbReference type="NCBIfam" id="NF003001">
    <property type="entry name" value="PRK03784.1"/>
    <property type="match status" value="1"/>
</dbReference>
<dbReference type="PANTHER" id="PTHR30472">
    <property type="entry name" value="FERRIC ENTEROBACTIN TRANSPORT SYSTEM PERMEASE PROTEIN"/>
    <property type="match status" value="1"/>
</dbReference>
<dbReference type="PANTHER" id="PTHR30472:SF29">
    <property type="entry name" value="VITAMIN B12 IMPORT SYSTEM PERMEASE PROTEIN BTUC"/>
    <property type="match status" value="1"/>
</dbReference>
<dbReference type="Pfam" id="PF01032">
    <property type="entry name" value="FecCD"/>
    <property type="match status" value="1"/>
</dbReference>
<dbReference type="SUPFAM" id="SSF81345">
    <property type="entry name" value="ABC transporter involved in vitamin B12 uptake, BtuC"/>
    <property type="match status" value="1"/>
</dbReference>
<sequence length="326" mass="34949">MLTLARQQQRQNIRWLLCLSVLMLLALLLSLCAGEQWISPGDWFTPRGELFVWQIRLPRTLAVLLVGAALAISGAVMQALFENPLAEPGLLGVSNGAGVGLIAAVLLGQGQLPNWALGLCAIAGALIITLILLRFARRHLSTSRLLLAGVALGIICSALMTWAIYFSTSVDLRQLMYWMMGGFGGVDWRQSWLMLALIPVLLWICCQSRPMNMLALGEISARQLGLPLWFWRNVLVAATGWMVGVSVALAGAIGFIGLVIPHILRLCGLTDHRVLLPGCALAGASALLLADIVARLALAAAELPIGVVTATLGAPVFIWLLLKAGR</sequence>
<reference key="1">
    <citation type="journal article" date="2006" name="Proc. Natl. Acad. Sci. U.S.A.">
        <title>Identification of genes subject to positive selection in uropathogenic strains of Escherichia coli: a comparative genomics approach.</title>
        <authorList>
            <person name="Chen S.L."/>
            <person name="Hung C.-S."/>
            <person name="Xu J."/>
            <person name="Reigstad C.S."/>
            <person name="Magrini V."/>
            <person name="Sabo A."/>
            <person name="Blasiar D."/>
            <person name="Bieri T."/>
            <person name="Meyer R.R."/>
            <person name="Ozersky P."/>
            <person name="Armstrong J.R."/>
            <person name="Fulton R.S."/>
            <person name="Latreille J.P."/>
            <person name="Spieth J."/>
            <person name="Hooton T.M."/>
            <person name="Mardis E.R."/>
            <person name="Hultgren S.J."/>
            <person name="Gordon J.I."/>
        </authorList>
    </citation>
    <scope>NUCLEOTIDE SEQUENCE [LARGE SCALE GENOMIC DNA]</scope>
    <source>
        <strain>UTI89 / UPEC</strain>
    </source>
</reference>
<evidence type="ECO:0000255" key="1">
    <source>
        <dbReference type="HAMAP-Rule" id="MF_01004"/>
    </source>
</evidence>
<accession>Q1RB84</accession>
<protein>
    <recommendedName>
        <fullName evidence="1">Vitamin B12 import system permease protein BtuC</fullName>
    </recommendedName>
</protein>
<name>BTUC_ECOUT</name>
<gene>
    <name evidence="1" type="primary">btuC</name>
    <name type="ordered locus">UTI89_C1904</name>
</gene>
<proteinExistence type="inferred from homology"/>
<organism>
    <name type="scientific">Escherichia coli (strain UTI89 / UPEC)</name>
    <dbReference type="NCBI Taxonomy" id="364106"/>
    <lineage>
        <taxon>Bacteria</taxon>
        <taxon>Pseudomonadati</taxon>
        <taxon>Pseudomonadota</taxon>
        <taxon>Gammaproteobacteria</taxon>
        <taxon>Enterobacterales</taxon>
        <taxon>Enterobacteriaceae</taxon>
        <taxon>Escherichia</taxon>
    </lineage>
</organism>
<keyword id="KW-0997">Cell inner membrane</keyword>
<keyword id="KW-1003">Cell membrane</keyword>
<keyword id="KW-0472">Membrane</keyword>
<keyword id="KW-0812">Transmembrane</keyword>
<keyword id="KW-1133">Transmembrane helix</keyword>
<keyword id="KW-0813">Transport</keyword>